<protein>
    <recommendedName>
        <fullName>Uncharacterized protein YfgI</fullName>
    </recommendedName>
</protein>
<dbReference type="EMBL" id="U00096">
    <property type="protein sequence ID" value="AAC75559.1"/>
    <property type="molecule type" value="Genomic_DNA"/>
</dbReference>
<dbReference type="EMBL" id="AP009048">
    <property type="protein sequence ID" value="BAE76727.1"/>
    <property type="molecule type" value="Genomic_DNA"/>
</dbReference>
<dbReference type="PIR" id="A65027">
    <property type="entry name" value="A65027"/>
</dbReference>
<dbReference type="RefSeq" id="NP_417001.1">
    <property type="nucleotide sequence ID" value="NC_000913.3"/>
</dbReference>
<dbReference type="RefSeq" id="WP_000755173.1">
    <property type="nucleotide sequence ID" value="NZ_LN832404.1"/>
</dbReference>
<dbReference type="BioGRID" id="4259646">
    <property type="interactions" value="18"/>
</dbReference>
<dbReference type="DIP" id="DIP-12040N"/>
<dbReference type="FunCoup" id="P76573">
    <property type="interactions" value="131"/>
</dbReference>
<dbReference type="IntAct" id="P76573">
    <property type="interactions" value="4"/>
</dbReference>
<dbReference type="STRING" id="511145.b2506"/>
<dbReference type="PaxDb" id="511145-b2506"/>
<dbReference type="EnsemblBacteria" id="AAC75559">
    <property type="protein sequence ID" value="AAC75559"/>
    <property type="gene ID" value="b2506"/>
</dbReference>
<dbReference type="GeneID" id="945168"/>
<dbReference type="KEGG" id="ecj:JW2490"/>
<dbReference type="KEGG" id="eco:b2506"/>
<dbReference type="KEGG" id="ecoc:C3026_13900"/>
<dbReference type="PATRIC" id="fig|511145.12.peg.2604"/>
<dbReference type="EchoBASE" id="EB3957"/>
<dbReference type="eggNOG" id="ENOG5031FD2">
    <property type="taxonomic scope" value="Bacteria"/>
</dbReference>
<dbReference type="HOGENOM" id="CLU_128672_0_0_6"/>
<dbReference type="InParanoid" id="P76573"/>
<dbReference type="OMA" id="QHDEWIA"/>
<dbReference type="OrthoDB" id="6573110at2"/>
<dbReference type="BioCyc" id="EcoCyc:G7317-MONOMER"/>
<dbReference type="PRO" id="PR:P76573"/>
<dbReference type="Proteomes" id="UP000000625">
    <property type="component" value="Chromosome"/>
</dbReference>
<dbReference type="GO" id="GO:0006974">
    <property type="term" value="P:DNA damage response"/>
    <property type="evidence" value="ECO:0000315"/>
    <property type="project" value="EcoCyc"/>
</dbReference>
<dbReference type="InterPro" id="IPR020231">
    <property type="entry name" value="Uncharacterised_YfgI"/>
</dbReference>
<dbReference type="Pfam" id="PF17358">
    <property type="entry name" value="DUF5384"/>
    <property type="match status" value="1"/>
</dbReference>
<sequence>MKKVFLCAILASLSYPAIASSLQDQLSAVAEAEQQGKNEEQRQHDEWVAERNREIQQEKQRRANAQAAANKRAATAAANKKARQDKLDAEASADKKRDQSYEDELRSLEIQKQKLALAKEEARVKRENEFIDQELKHKAAQTDVVQSEADANRNMTEGGRDLMKSVGKAEENKSDSWFN</sequence>
<proteinExistence type="predicted"/>
<keyword id="KW-1185">Reference proteome</keyword>
<accession>P76573</accession>
<accession>Q2MAH9</accession>
<evidence type="ECO:0000256" key="1">
    <source>
        <dbReference type="SAM" id="MobiDB-lite"/>
    </source>
</evidence>
<organism>
    <name type="scientific">Escherichia coli (strain K12)</name>
    <dbReference type="NCBI Taxonomy" id="83333"/>
    <lineage>
        <taxon>Bacteria</taxon>
        <taxon>Pseudomonadati</taxon>
        <taxon>Pseudomonadota</taxon>
        <taxon>Gammaproteobacteria</taxon>
        <taxon>Enterobacterales</taxon>
        <taxon>Enterobacteriaceae</taxon>
        <taxon>Escherichia</taxon>
    </lineage>
</organism>
<name>YFGI_ECOLI</name>
<reference key="1">
    <citation type="journal article" date="1997" name="Science">
        <title>The complete genome sequence of Escherichia coli K-12.</title>
        <authorList>
            <person name="Blattner F.R."/>
            <person name="Plunkett G. III"/>
            <person name="Bloch C.A."/>
            <person name="Perna N.T."/>
            <person name="Burland V."/>
            <person name="Riley M."/>
            <person name="Collado-Vides J."/>
            <person name="Glasner J.D."/>
            <person name="Rode C.K."/>
            <person name="Mayhew G.F."/>
            <person name="Gregor J."/>
            <person name="Davis N.W."/>
            <person name="Kirkpatrick H.A."/>
            <person name="Goeden M.A."/>
            <person name="Rose D.J."/>
            <person name="Mau B."/>
            <person name="Shao Y."/>
        </authorList>
    </citation>
    <scope>NUCLEOTIDE SEQUENCE [LARGE SCALE GENOMIC DNA]</scope>
    <source>
        <strain>K12 / MG1655 / ATCC 47076</strain>
    </source>
</reference>
<reference key="2">
    <citation type="journal article" date="2006" name="Mol. Syst. Biol.">
        <title>Highly accurate genome sequences of Escherichia coli K-12 strains MG1655 and W3110.</title>
        <authorList>
            <person name="Hayashi K."/>
            <person name="Morooka N."/>
            <person name="Yamamoto Y."/>
            <person name="Fujita K."/>
            <person name="Isono K."/>
            <person name="Choi S."/>
            <person name="Ohtsubo E."/>
            <person name="Baba T."/>
            <person name="Wanner B.L."/>
            <person name="Mori H."/>
            <person name="Horiuchi T."/>
        </authorList>
    </citation>
    <scope>NUCLEOTIDE SEQUENCE [LARGE SCALE GENOMIC DNA]</scope>
    <source>
        <strain>K12 / W3110 / ATCC 27325 / DSM 5911</strain>
    </source>
</reference>
<gene>
    <name type="primary">yfgI</name>
    <name type="ordered locus">b2506</name>
    <name type="ordered locus">JW2490</name>
</gene>
<feature type="chain" id="PRO_0000169245" description="Uncharacterized protein YfgI">
    <location>
        <begin position="1"/>
        <end position="179"/>
    </location>
</feature>
<feature type="region of interest" description="Disordered" evidence="1">
    <location>
        <begin position="26"/>
        <end position="103"/>
    </location>
</feature>
<feature type="region of interest" description="Disordered" evidence="1">
    <location>
        <begin position="136"/>
        <end position="179"/>
    </location>
</feature>
<feature type="compositionally biased region" description="Basic and acidic residues" evidence="1">
    <location>
        <begin position="34"/>
        <end position="61"/>
    </location>
</feature>
<feature type="compositionally biased region" description="Low complexity" evidence="1">
    <location>
        <begin position="63"/>
        <end position="79"/>
    </location>
</feature>
<feature type="compositionally biased region" description="Basic and acidic residues" evidence="1">
    <location>
        <begin position="82"/>
        <end position="103"/>
    </location>
</feature>
<feature type="compositionally biased region" description="Basic and acidic residues" evidence="1">
    <location>
        <begin position="158"/>
        <end position="179"/>
    </location>
</feature>